<organism>
    <name type="scientific">Xenopus laevis</name>
    <name type="common">African clawed frog</name>
    <dbReference type="NCBI Taxonomy" id="8355"/>
    <lineage>
        <taxon>Eukaryota</taxon>
        <taxon>Metazoa</taxon>
        <taxon>Chordata</taxon>
        <taxon>Craniata</taxon>
        <taxon>Vertebrata</taxon>
        <taxon>Euteleostomi</taxon>
        <taxon>Amphibia</taxon>
        <taxon>Batrachia</taxon>
        <taxon>Anura</taxon>
        <taxon>Pipoidea</taxon>
        <taxon>Pipidae</taxon>
        <taxon>Xenopodinae</taxon>
        <taxon>Xenopus</taxon>
        <taxon>Xenopus</taxon>
    </lineage>
</organism>
<evidence type="ECO:0000256" key="1">
    <source>
        <dbReference type="SAM" id="MobiDB-lite"/>
    </source>
</evidence>
<accession>Q5XHI2</accession>
<reference key="1">
    <citation type="submission" date="2004-10" db="EMBL/GenBank/DDBJ databases">
        <authorList>
            <consortium name="NIH - Xenopus Gene Collection (XGC) project"/>
        </authorList>
    </citation>
    <scope>NUCLEOTIDE SEQUENCE [LARGE SCALE MRNA]</scope>
    <source>
        <tissue>Embryo</tissue>
    </source>
</reference>
<sequence>MSKRNNVSYVKPAEPSFISKFKKDVCYKEGPTVDTKRQELPILSEDSDGSDKEDEQPQVVVLRKGDLSEEDVMKIKQQIKENTKDEEAAPSDGKILFKKPVKRLSGDTTSGVNACSTKKKKQEDTKESSGTKSSQKQVKNSSLLSFDDEDYDD</sequence>
<keyword id="KW-1185">Reference proteome</keyword>
<protein>
    <recommendedName>
        <fullName>Uncharacterized protein KIAA1143 homolog</fullName>
    </recommendedName>
</protein>
<proteinExistence type="evidence at transcript level"/>
<dbReference type="EMBL" id="BC084075">
    <property type="protein sequence ID" value="AAH84075.1"/>
    <property type="molecule type" value="mRNA"/>
</dbReference>
<dbReference type="RefSeq" id="NP_001088167.1">
    <property type="nucleotide sequence ID" value="NM_001094698.1"/>
</dbReference>
<dbReference type="RefSeq" id="XP_018124238.1">
    <property type="nucleotide sequence ID" value="XM_018268749.2"/>
</dbReference>
<dbReference type="RefSeq" id="XP_018124239.1">
    <property type="nucleotide sequence ID" value="XM_018268750.1"/>
</dbReference>
<dbReference type="RefSeq" id="XP_018124240.1">
    <property type="nucleotide sequence ID" value="XM_018268751.2"/>
</dbReference>
<dbReference type="RefSeq" id="XP_018124241.1">
    <property type="nucleotide sequence ID" value="XM_018268752.1"/>
</dbReference>
<dbReference type="SMR" id="Q5XHI2"/>
<dbReference type="DNASU" id="494991"/>
<dbReference type="GeneID" id="494991"/>
<dbReference type="KEGG" id="xla:494991"/>
<dbReference type="AGR" id="Xenbase:XB-GENE-6254742"/>
<dbReference type="CTD" id="494991"/>
<dbReference type="Xenbase" id="XB-GENE-6254742">
    <property type="gene designation" value="KIAA1143.S"/>
</dbReference>
<dbReference type="OMA" id="KRQVGYR"/>
<dbReference type="OrthoDB" id="10043580at2759"/>
<dbReference type="Proteomes" id="UP000186698">
    <property type="component" value="Chromosome 6S"/>
</dbReference>
<dbReference type="Bgee" id="494991">
    <property type="expression patterns" value="Expressed in egg cell and 19 other cell types or tissues"/>
</dbReference>
<dbReference type="InterPro" id="IPR027911">
    <property type="entry name" value="DUF4604"/>
</dbReference>
<dbReference type="InterPro" id="IPR040219">
    <property type="entry name" value="KIAA1143-like"/>
</dbReference>
<dbReference type="PANTHER" id="PTHR31195">
    <property type="entry name" value="GEO02494P1"/>
    <property type="match status" value="1"/>
</dbReference>
<dbReference type="PANTHER" id="PTHR31195:SF2">
    <property type="entry name" value="GEO02494P1"/>
    <property type="match status" value="1"/>
</dbReference>
<dbReference type="Pfam" id="PF15377">
    <property type="entry name" value="DUF4604"/>
    <property type="match status" value="1"/>
</dbReference>
<feature type="chain" id="PRO_0000248342" description="Uncharacterized protein KIAA1143 homolog">
    <location>
        <begin position="1"/>
        <end position="153"/>
    </location>
</feature>
<feature type="region of interest" description="Disordered" evidence="1">
    <location>
        <begin position="30"/>
        <end position="66"/>
    </location>
</feature>
<feature type="region of interest" description="Disordered" evidence="1">
    <location>
        <begin position="79"/>
        <end position="153"/>
    </location>
</feature>
<feature type="compositionally biased region" description="Acidic residues" evidence="1">
    <location>
        <begin position="45"/>
        <end position="56"/>
    </location>
</feature>
<feature type="compositionally biased region" description="Polar residues" evidence="1">
    <location>
        <begin position="106"/>
        <end position="116"/>
    </location>
</feature>
<feature type="compositionally biased region" description="Polar residues" evidence="1">
    <location>
        <begin position="130"/>
        <end position="144"/>
    </location>
</feature>
<name>K1143_XENLA</name>